<comment type="similarity">
    <text evidence="1">Belongs to the bacterial ribosomal protein bS21 family.</text>
</comment>
<sequence>MPSVKVRENEPFEFALRRFKRTCEKAGVLAETRKREFYEKPTQERKRKAAAAVKRQLRRSSRDVTKRQRLY</sequence>
<gene>
    <name evidence="1" type="primary">rpsU</name>
    <name type="ordered locus">XOO4929</name>
</gene>
<reference key="1">
    <citation type="journal article" date="2005" name="Nucleic Acids Res.">
        <title>The genome sequence of Xanthomonas oryzae pathovar oryzae KACC10331, the bacterial blight pathogen of rice.</title>
        <authorList>
            <person name="Lee B.-M."/>
            <person name="Park Y.-J."/>
            <person name="Park D.-S."/>
            <person name="Kang H.-W."/>
            <person name="Kim J.-G."/>
            <person name="Song E.-S."/>
            <person name="Park I.-C."/>
            <person name="Yoon U.-H."/>
            <person name="Hahn J.-H."/>
            <person name="Koo B.-S."/>
            <person name="Lee G.-B."/>
            <person name="Kim H."/>
            <person name="Park H.-S."/>
            <person name="Yoon K.-O."/>
            <person name="Kim J.-H."/>
            <person name="Jung C.-H."/>
            <person name="Koh N.-H."/>
            <person name="Seo J.-S."/>
            <person name="Go S.-J."/>
        </authorList>
    </citation>
    <scope>NUCLEOTIDE SEQUENCE [LARGE SCALE GENOMIC DNA]</scope>
    <source>
        <strain>KACC10331 / KXO85</strain>
    </source>
</reference>
<keyword id="KW-1185">Reference proteome</keyword>
<keyword id="KW-0687">Ribonucleoprotein</keyword>
<keyword id="KW-0689">Ribosomal protein</keyword>
<evidence type="ECO:0000255" key="1">
    <source>
        <dbReference type="HAMAP-Rule" id="MF_00358"/>
    </source>
</evidence>
<evidence type="ECO:0000256" key="2">
    <source>
        <dbReference type="SAM" id="MobiDB-lite"/>
    </source>
</evidence>
<evidence type="ECO:0000305" key="3"/>
<feature type="chain" id="PRO_0000266799" description="Small ribosomal subunit protein bS21">
    <location>
        <begin position="1"/>
        <end position="71"/>
    </location>
</feature>
<feature type="region of interest" description="Disordered" evidence="2">
    <location>
        <begin position="39"/>
        <end position="71"/>
    </location>
</feature>
<feature type="compositionally biased region" description="Basic residues" evidence="2">
    <location>
        <begin position="45"/>
        <end position="59"/>
    </location>
</feature>
<feature type="compositionally biased region" description="Basic and acidic residues" evidence="2">
    <location>
        <begin position="60"/>
        <end position="71"/>
    </location>
</feature>
<protein>
    <recommendedName>
        <fullName evidence="1">Small ribosomal subunit protein bS21</fullName>
    </recommendedName>
    <alternativeName>
        <fullName evidence="3">30S ribosomal protein S21</fullName>
    </alternativeName>
</protein>
<accession>Q05I90</accession>
<name>RS21_XANOR</name>
<dbReference type="EMBL" id="AE013598">
    <property type="protein sequence ID" value="ABJ90033.1"/>
    <property type="molecule type" value="Genomic_DNA"/>
</dbReference>
<dbReference type="SMR" id="Q05I90"/>
<dbReference type="STRING" id="291331.XOO4929"/>
<dbReference type="KEGG" id="xoo:XOO4929"/>
<dbReference type="HOGENOM" id="CLU_159258_1_0_6"/>
<dbReference type="Proteomes" id="UP000006735">
    <property type="component" value="Chromosome"/>
</dbReference>
<dbReference type="GO" id="GO:1990904">
    <property type="term" value="C:ribonucleoprotein complex"/>
    <property type="evidence" value="ECO:0007669"/>
    <property type="project" value="UniProtKB-KW"/>
</dbReference>
<dbReference type="GO" id="GO:0005840">
    <property type="term" value="C:ribosome"/>
    <property type="evidence" value="ECO:0007669"/>
    <property type="project" value="UniProtKB-KW"/>
</dbReference>
<dbReference type="GO" id="GO:0003735">
    <property type="term" value="F:structural constituent of ribosome"/>
    <property type="evidence" value="ECO:0007669"/>
    <property type="project" value="InterPro"/>
</dbReference>
<dbReference type="GO" id="GO:0006412">
    <property type="term" value="P:translation"/>
    <property type="evidence" value="ECO:0007669"/>
    <property type="project" value="UniProtKB-UniRule"/>
</dbReference>
<dbReference type="Gene3D" id="1.20.5.1150">
    <property type="entry name" value="Ribosomal protein S8"/>
    <property type="match status" value="1"/>
</dbReference>
<dbReference type="HAMAP" id="MF_00358">
    <property type="entry name" value="Ribosomal_bS21"/>
    <property type="match status" value="1"/>
</dbReference>
<dbReference type="InterPro" id="IPR001911">
    <property type="entry name" value="Ribosomal_bS21"/>
</dbReference>
<dbReference type="InterPro" id="IPR018278">
    <property type="entry name" value="Ribosomal_bS21_CS"/>
</dbReference>
<dbReference type="InterPro" id="IPR038380">
    <property type="entry name" value="Ribosomal_bS21_sf"/>
</dbReference>
<dbReference type="NCBIfam" id="TIGR00030">
    <property type="entry name" value="S21p"/>
    <property type="match status" value="1"/>
</dbReference>
<dbReference type="PANTHER" id="PTHR21109">
    <property type="entry name" value="MITOCHONDRIAL 28S RIBOSOMAL PROTEIN S21"/>
    <property type="match status" value="1"/>
</dbReference>
<dbReference type="PANTHER" id="PTHR21109:SF22">
    <property type="entry name" value="SMALL RIBOSOMAL SUBUNIT PROTEIN BS21"/>
    <property type="match status" value="1"/>
</dbReference>
<dbReference type="Pfam" id="PF01165">
    <property type="entry name" value="Ribosomal_S21"/>
    <property type="match status" value="1"/>
</dbReference>
<dbReference type="PRINTS" id="PR00976">
    <property type="entry name" value="RIBOSOMALS21"/>
</dbReference>
<dbReference type="PROSITE" id="PS01181">
    <property type="entry name" value="RIBOSOMAL_S21"/>
    <property type="match status" value="1"/>
</dbReference>
<organism>
    <name type="scientific">Xanthomonas oryzae pv. oryzae (strain KACC10331 / KXO85)</name>
    <dbReference type="NCBI Taxonomy" id="291331"/>
    <lineage>
        <taxon>Bacteria</taxon>
        <taxon>Pseudomonadati</taxon>
        <taxon>Pseudomonadota</taxon>
        <taxon>Gammaproteobacteria</taxon>
        <taxon>Lysobacterales</taxon>
        <taxon>Lysobacteraceae</taxon>
        <taxon>Xanthomonas</taxon>
    </lineage>
</organism>
<proteinExistence type="inferred from homology"/>